<organism>
    <name type="scientific">Clostridium botulinum (strain Loch Maree / Type A3)</name>
    <dbReference type="NCBI Taxonomy" id="498214"/>
    <lineage>
        <taxon>Bacteria</taxon>
        <taxon>Bacillati</taxon>
        <taxon>Bacillota</taxon>
        <taxon>Clostridia</taxon>
        <taxon>Eubacteriales</taxon>
        <taxon>Clostridiaceae</taxon>
        <taxon>Clostridium</taxon>
    </lineage>
</organism>
<name>SYY_CLOBM</name>
<gene>
    <name evidence="1" type="primary">tyrS</name>
    <name type="ordered locus">CLK_2740</name>
</gene>
<evidence type="ECO:0000255" key="1">
    <source>
        <dbReference type="HAMAP-Rule" id="MF_02006"/>
    </source>
</evidence>
<proteinExistence type="inferred from homology"/>
<keyword id="KW-0030">Aminoacyl-tRNA synthetase</keyword>
<keyword id="KW-0067">ATP-binding</keyword>
<keyword id="KW-0963">Cytoplasm</keyword>
<keyword id="KW-0436">Ligase</keyword>
<keyword id="KW-0547">Nucleotide-binding</keyword>
<keyword id="KW-0648">Protein biosynthesis</keyword>
<keyword id="KW-0694">RNA-binding</keyword>
<reference key="1">
    <citation type="journal article" date="2007" name="PLoS ONE">
        <title>Analysis of the neurotoxin complex genes in Clostridium botulinum A1-A4 and B1 strains: BoNT/A3, /Ba4 and /B1 clusters are located within plasmids.</title>
        <authorList>
            <person name="Smith T.J."/>
            <person name="Hill K.K."/>
            <person name="Foley B.T."/>
            <person name="Detter J.C."/>
            <person name="Munk A.C."/>
            <person name="Bruce D.C."/>
            <person name="Doggett N.A."/>
            <person name="Smith L.A."/>
            <person name="Marks J.D."/>
            <person name="Xie G."/>
            <person name="Brettin T.S."/>
        </authorList>
    </citation>
    <scope>NUCLEOTIDE SEQUENCE [LARGE SCALE GENOMIC DNA]</scope>
    <source>
        <strain>Loch Maree / Type A3</strain>
    </source>
</reference>
<comment type="function">
    <text evidence="1">Catalyzes the attachment of tyrosine to tRNA(Tyr) in a two-step reaction: tyrosine is first activated by ATP to form Tyr-AMP and then transferred to the acceptor end of tRNA(Tyr).</text>
</comment>
<comment type="catalytic activity">
    <reaction evidence="1">
        <text>tRNA(Tyr) + L-tyrosine + ATP = L-tyrosyl-tRNA(Tyr) + AMP + diphosphate + H(+)</text>
        <dbReference type="Rhea" id="RHEA:10220"/>
        <dbReference type="Rhea" id="RHEA-COMP:9706"/>
        <dbReference type="Rhea" id="RHEA-COMP:9707"/>
        <dbReference type="ChEBI" id="CHEBI:15378"/>
        <dbReference type="ChEBI" id="CHEBI:30616"/>
        <dbReference type="ChEBI" id="CHEBI:33019"/>
        <dbReference type="ChEBI" id="CHEBI:58315"/>
        <dbReference type="ChEBI" id="CHEBI:78442"/>
        <dbReference type="ChEBI" id="CHEBI:78536"/>
        <dbReference type="ChEBI" id="CHEBI:456215"/>
        <dbReference type="EC" id="6.1.1.1"/>
    </reaction>
</comment>
<comment type="subunit">
    <text evidence="1">Homodimer.</text>
</comment>
<comment type="subcellular location">
    <subcellularLocation>
        <location evidence="1">Cytoplasm</location>
    </subcellularLocation>
</comment>
<comment type="similarity">
    <text evidence="1">Belongs to the class-I aminoacyl-tRNA synthetase family. TyrS type 1 subfamily.</text>
</comment>
<protein>
    <recommendedName>
        <fullName evidence="1">Tyrosine--tRNA ligase</fullName>
        <ecNumber evidence="1">6.1.1.1</ecNumber>
    </recommendedName>
    <alternativeName>
        <fullName evidence="1">Tyrosyl-tRNA synthetase</fullName>
        <shortName evidence="1">TyrRS</shortName>
    </alternativeName>
</protein>
<dbReference type="EC" id="6.1.1.1" evidence="1"/>
<dbReference type="EMBL" id="CP000962">
    <property type="protein sequence ID" value="ACA53793.1"/>
    <property type="molecule type" value="Genomic_DNA"/>
</dbReference>
<dbReference type="RefSeq" id="WP_012341979.1">
    <property type="nucleotide sequence ID" value="NC_010520.1"/>
</dbReference>
<dbReference type="SMR" id="B1L203"/>
<dbReference type="KEGG" id="cbl:CLK_2740"/>
<dbReference type="HOGENOM" id="CLU_024003_0_3_9"/>
<dbReference type="GO" id="GO:0005829">
    <property type="term" value="C:cytosol"/>
    <property type="evidence" value="ECO:0007669"/>
    <property type="project" value="TreeGrafter"/>
</dbReference>
<dbReference type="GO" id="GO:0005524">
    <property type="term" value="F:ATP binding"/>
    <property type="evidence" value="ECO:0007669"/>
    <property type="project" value="UniProtKB-UniRule"/>
</dbReference>
<dbReference type="GO" id="GO:0003723">
    <property type="term" value="F:RNA binding"/>
    <property type="evidence" value="ECO:0007669"/>
    <property type="project" value="UniProtKB-KW"/>
</dbReference>
<dbReference type="GO" id="GO:0004831">
    <property type="term" value="F:tyrosine-tRNA ligase activity"/>
    <property type="evidence" value="ECO:0007669"/>
    <property type="project" value="UniProtKB-UniRule"/>
</dbReference>
<dbReference type="GO" id="GO:0006437">
    <property type="term" value="P:tyrosyl-tRNA aminoacylation"/>
    <property type="evidence" value="ECO:0007669"/>
    <property type="project" value="UniProtKB-UniRule"/>
</dbReference>
<dbReference type="CDD" id="cd00165">
    <property type="entry name" value="S4"/>
    <property type="match status" value="1"/>
</dbReference>
<dbReference type="CDD" id="cd00805">
    <property type="entry name" value="TyrRS_core"/>
    <property type="match status" value="1"/>
</dbReference>
<dbReference type="FunFam" id="1.10.240.10:FF:000001">
    <property type="entry name" value="Tyrosine--tRNA ligase"/>
    <property type="match status" value="1"/>
</dbReference>
<dbReference type="FunFam" id="3.10.290.10:FF:000022">
    <property type="entry name" value="Tyrosine--tRNA ligase"/>
    <property type="match status" value="1"/>
</dbReference>
<dbReference type="FunFam" id="3.40.50.620:FF:000008">
    <property type="entry name" value="Tyrosine--tRNA ligase"/>
    <property type="match status" value="1"/>
</dbReference>
<dbReference type="Gene3D" id="3.40.50.620">
    <property type="entry name" value="HUPs"/>
    <property type="match status" value="1"/>
</dbReference>
<dbReference type="Gene3D" id="3.10.290.10">
    <property type="entry name" value="RNA-binding S4 domain"/>
    <property type="match status" value="1"/>
</dbReference>
<dbReference type="Gene3D" id="1.10.240.10">
    <property type="entry name" value="Tyrosyl-Transfer RNA Synthetase"/>
    <property type="match status" value="1"/>
</dbReference>
<dbReference type="HAMAP" id="MF_02006">
    <property type="entry name" value="Tyr_tRNA_synth_type1"/>
    <property type="match status" value="1"/>
</dbReference>
<dbReference type="InterPro" id="IPR001412">
    <property type="entry name" value="aa-tRNA-synth_I_CS"/>
</dbReference>
<dbReference type="InterPro" id="IPR002305">
    <property type="entry name" value="aa-tRNA-synth_Ic"/>
</dbReference>
<dbReference type="InterPro" id="IPR014729">
    <property type="entry name" value="Rossmann-like_a/b/a_fold"/>
</dbReference>
<dbReference type="InterPro" id="IPR036986">
    <property type="entry name" value="S4_RNA-bd_sf"/>
</dbReference>
<dbReference type="InterPro" id="IPR054608">
    <property type="entry name" value="SYY-like_C"/>
</dbReference>
<dbReference type="InterPro" id="IPR002307">
    <property type="entry name" value="Tyr-tRNA-ligase"/>
</dbReference>
<dbReference type="InterPro" id="IPR024088">
    <property type="entry name" value="Tyr-tRNA-ligase_bac-type"/>
</dbReference>
<dbReference type="InterPro" id="IPR024107">
    <property type="entry name" value="Tyr-tRNA-ligase_bac_1"/>
</dbReference>
<dbReference type="NCBIfam" id="TIGR00234">
    <property type="entry name" value="tyrS"/>
    <property type="match status" value="1"/>
</dbReference>
<dbReference type="PANTHER" id="PTHR11766:SF0">
    <property type="entry name" value="TYROSINE--TRNA LIGASE, MITOCHONDRIAL"/>
    <property type="match status" value="1"/>
</dbReference>
<dbReference type="PANTHER" id="PTHR11766">
    <property type="entry name" value="TYROSYL-TRNA SYNTHETASE"/>
    <property type="match status" value="1"/>
</dbReference>
<dbReference type="Pfam" id="PF22421">
    <property type="entry name" value="SYY_C-terminal"/>
    <property type="match status" value="1"/>
</dbReference>
<dbReference type="Pfam" id="PF00579">
    <property type="entry name" value="tRNA-synt_1b"/>
    <property type="match status" value="1"/>
</dbReference>
<dbReference type="PRINTS" id="PR01040">
    <property type="entry name" value="TRNASYNTHTYR"/>
</dbReference>
<dbReference type="SUPFAM" id="SSF55174">
    <property type="entry name" value="Alpha-L RNA-binding motif"/>
    <property type="match status" value="1"/>
</dbReference>
<dbReference type="SUPFAM" id="SSF52374">
    <property type="entry name" value="Nucleotidylyl transferase"/>
    <property type="match status" value="1"/>
</dbReference>
<dbReference type="PROSITE" id="PS00178">
    <property type="entry name" value="AA_TRNA_LIGASE_I"/>
    <property type="match status" value="1"/>
</dbReference>
<dbReference type="PROSITE" id="PS50889">
    <property type="entry name" value="S4"/>
    <property type="match status" value="1"/>
</dbReference>
<feature type="chain" id="PRO_1000189279" description="Tyrosine--tRNA ligase">
    <location>
        <begin position="1"/>
        <end position="407"/>
    </location>
</feature>
<feature type="domain" description="S4 RNA-binding" evidence="1">
    <location>
        <begin position="341"/>
        <end position="405"/>
    </location>
</feature>
<feature type="short sequence motif" description="'HIGH' region">
    <location>
        <begin position="40"/>
        <end position="49"/>
    </location>
</feature>
<feature type="short sequence motif" description="'KMSKS' region">
    <location>
        <begin position="228"/>
        <end position="232"/>
    </location>
</feature>
<feature type="binding site" evidence="1">
    <location>
        <position position="35"/>
    </location>
    <ligand>
        <name>L-tyrosine</name>
        <dbReference type="ChEBI" id="CHEBI:58315"/>
    </ligand>
</feature>
<feature type="binding site" evidence="1">
    <location>
        <position position="168"/>
    </location>
    <ligand>
        <name>L-tyrosine</name>
        <dbReference type="ChEBI" id="CHEBI:58315"/>
    </ligand>
</feature>
<feature type="binding site" evidence="1">
    <location>
        <position position="172"/>
    </location>
    <ligand>
        <name>L-tyrosine</name>
        <dbReference type="ChEBI" id="CHEBI:58315"/>
    </ligand>
</feature>
<feature type="binding site" evidence="1">
    <location>
        <position position="231"/>
    </location>
    <ligand>
        <name>ATP</name>
        <dbReference type="ChEBI" id="CHEBI:30616"/>
    </ligand>
</feature>
<sequence length="407" mass="46456">MSNVYDILKERGYIKQLTHEEEIRELLGKEKISFYIGFDPTADSLHVGHFLQMMVMAHMQKAGHRPIALVGGGTGMIGDPTGKTDMRKMMTKEQIEYNCNCFKKQLAKIIDFSEDKAIMVNNADWLLNLNYIEFLREIGVHFSVNKMLTAECFKSRLEKGLSFLEFNYMLMQGYDFLELNRKYNCVMELGGDDQWSNILAGVDLIRRKESKSAYGMTFTLLTNSEGKKMGKTESGALWLDPEKTSPYEFYQYWRNVADADVEKCLRLITFLPMDEVRRLSSLEGAEINEAKRVLAFEVTKLIHGEEEAQKAKVAAEALFGGNVKDLGNMPTAYIDKDDLNNSLVDLLAKCEILPSKSEARRLIKQGGLYVNDEKVTDINLVLTEEHVTEDGIMIRRGKKNFNRIVVE</sequence>
<accession>B1L203</accession>